<proteinExistence type="evidence at transcript level"/>
<evidence type="ECO:0000250" key="1"/>
<evidence type="ECO:0000305" key="2"/>
<accession>Q5R8K0</accession>
<protein>
    <recommendedName>
        <fullName>DNA damage-inducible transcript 4-like protein</fullName>
    </recommendedName>
</protein>
<gene>
    <name type="primary">DDIT4L</name>
</gene>
<comment type="function">
    <text evidence="1">Inhibits cell growth by regulating the TOR signaling pathway upstream of the TSC1-TSC2 complex and downstream of AKT1.</text>
</comment>
<comment type="subcellular location">
    <subcellularLocation>
        <location evidence="1">Cytoplasm</location>
    </subcellularLocation>
</comment>
<comment type="similarity">
    <text evidence="2">Belongs to the DDIT4 family.</text>
</comment>
<sequence>MVATGSLSGKNPASISELLDCGYRPESLLSDFDYWDYVVPEPNLNEVIFEESTCQNLVKMLENCLSKSKQTKLGCSKVLVPEKLTQRIAQDVLRLSSTEPCGLRGCVMHVNLEIENVCKKLDRIVCDSSVVPTFELTLVFKQENCSWSSFRDFFFSRGRFSSGFRRTLILSSGFRLVKKKLYSLIGATVIEGS</sequence>
<name>DDT4L_PONAB</name>
<reference key="1">
    <citation type="submission" date="2004-11" db="EMBL/GenBank/DDBJ databases">
        <authorList>
            <consortium name="The German cDNA consortium"/>
        </authorList>
    </citation>
    <scope>NUCLEOTIDE SEQUENCE [LARGE SCALE MRNA]</scope>
    <source>
        <tissue>Kidney</tissue>
    </source>
</reference>
<dbReference type="EMBL" id="CR859752">
    <property type="protein sequence ID" value="CAH91910.1"/>
    <property type="molecule type" value="mRNA"/>
</dbReference>
<dbReference type="RefSeq" id="NP_001126106.1">
    <property type="nucleotide sequence ID" value="NM_001132634.1"/>
</dbReference>
<dbReference type="SMR" id="Q5R8K0"/>
<dbReference type="GeneID" id="100173061"/>
<dbReference type="KEGG" id="pon:100173061"/>
<dbReference type="CTD" id="115265"/>
<dbReference type="eggNOG" id="ENOG502R3EE">
    <property type="taxonomic scope" value="Eukaryota"/>
</dbReference>
<dbReference type="InParanoid" id="Q5R8K0"/>
<dbReference type="OrthoDB" id="10018535at2759"/>
<dbReference type="Proteomes" id="UP000001595">
    <property type="component" value="Unplaced"/>
</dbReference>
<dbReference type="GO" id="GO:0005737">
    <property type="term" value="C:cytoplasm"/>
    <property type="evidence" value="ECO:0000250"/>
    <property type="project" value="UniProtKB"/>
</dbReference>
<dbReference type="GO" id="GO:0009968">
    <property type="term" value="P:negative regulation of signal transduction"/>
    <property type="evidence" value="ECO:0007669"/>
    <property type="project" value="InterPro"/>
</dbReference>
<dbReference type="FunFam" id="3.90.470.40:FF:000002">
    <property type="entry name" value="DNA damage-inducible transcript 4-like protein"/>
    <property type="match status" value="1"/>
</dbReference>
<dbReference type="Gene3D" id="3.90.470.40">
    <property type="entry name" value="RTP801-like"/>
    <property type="match status" value="1"/>
</dbReference>
<dbReference type="InterPro" id="IPR012918">
    <property type="entry name" value="RTP801-like"/>
</dbReference>
<dbReference type="InterPro" id="IPR038281">
    <property type="entry name" value="RTP801-like_C_sf"/>
</dbReference>
<dbReference type="PANTHER" id="PTHR12478:SF17">
    <property type="entry name" value="DNA DAMAGE-INDUCIBLE TRANSCRIPT 4-LIKE PROTEIN"/>
    <property type="match status" value="1"/>
</dbReference>
<dbReference type="PANTHER" id="PTHR12478">
    <property type="entry name" value="DNA-DAMAGE-INDUCIBLE TRANSCRIPT 4 PROTEIN DDIT4"/>
    <property type="match status" value="1"/>
</dbReference>
<dbReference type="Pfam" id="PF07809">
    <property type="entry name" value="RTP801_C"/>
    <property type="match status" value="1"/>
</dbReference>
<feature type="chain" id="PRO_0000307206" description="DNA damage-inducible transcript 4-like protein">
    <location>
        <begin position="1"/>
        <end position="193"/>
    </location>
</feature>
<organism>
    <name type="scientific">Pongo abelii</name>
    <name type="common">Sumatran orangutan</name>
    <name type="synonym">Pongo pygmaeus abelii</name>
    <dbReference type="NCBI Taxonomy" id="9601"/>
    <lineage>
        <taxon>Eukaryota</taxon>
        <taxon>Metazoa</taxon>
        <taxon>Chordata</taxon>
        <taxon>Craniata</taxon>
        <taxon>Vertebrata</taxon>
        <taxon>Euteleostomi</taxon>
        <taxon>Mammalia</taxon>
        <taxon>Eutheria</taxon>
        <taxon>Euarchontoglires</taxon>
        <taxon>Primates</taxon>
        <taxon>Haplorrhini</taxon>
        <taxon>Catarrhini</taxon>
        <taxon>Hominidae</taxon>
        <taxon>Pongo</taxon>
    </lineage>
</organism>
<keyword id="KW-0963">Cytoplasm</keyword>
<keyword id="KW-1185">Reference proteome</keyword>